<protein>
    <recommendedName>
        <fullName evidence="1">Small ribosomal subunit protein bS20</fullName>
    </recommendedName>
    <alternativeName>
        <fullName evidence="3">30S ribosomal protein S20</fullName>
    </alternativeName>
</protein>
<feature type="chain" id="PRO_1000014605" description="Small ribosomal subunit protein bS20">
    <location>
        <begin position="1"/>
        <end position="86"/>
    </location>
</feature>
<feature type="region of interest" description="Disordered" evidence="2">
    <location>
        <begin position="1"/>
        <end position="25"/>
    </location>
</feature>
<comment type="function">
    <text evidence="1">Binds directly to 16S ribosomal RNA.</text>
</comment>
<comment type="similarity">
    <text evidence="1">Belongs to the bacterial ribosomal protein bS20 family.</text>
</comment>
<proteinExistence type="inferred from homology"/>
<evidence type="ECO:0000255" key="1">
    <source>
        <dbReference type="HAMAP-Rule" id="MF_00500"/>
    </source>
</evidence>
<evidence type="ECO:0000256" key="2">
    <source>
        <dbReference type="SAM" id="MobiDB-lite"/>
    </source>
</evidence>
<evidence type="ECO:0000305" key="3"/>
<sequence length="86" mass="9405">MANIKSQQKRNRTNERARLRNKAVKSSLRTAVRAFREAAHAGDKAKAAELLASTNRKLDKAASKGVIHKNQAANKKSALAQALNKL</sequence>
<reference key="1">
    <citation type="journal article" date="2007" name="Proc. Natl. Acad. Sci. U.S.A.">
        <title>Genome plasticity of BCG and impact on vaccine efficacy.</title>
        <authorList>
            <person name="Brosch R."/>
            <person name="Gordon S.V."/>
            <person name="Garnier T."/>
            <person name="Eiglmeier K."/>
            <person name="Frigui W."/>
            <person name="Valenti P."/>
            <person name="Dos Santos S."/>
            <person name="Duthoy S."/>
            <person name="Lacroix C."/>
            <person name="Garcia-Pelayo C."/>
            <person name="Inwald J.K."/>
            <person name="Golby P."/>
            <person name="Garcia J.N."/>
            <person name="Hewinson R.G."/>
            <person name="Behr M.A."/>
            <person name="Quail M.A."/>
            <person name="Churcher C."/>
            <person name="Barrell B.G."/>
            <person name="Parkhill J."/>
            <person name="Cole S.T."/>
        </authorList>
    </citation>
    <scope>NUCLEOTIDE SEQUENCE [LARGE SCALE GENOMIC DNA]</scope>
    <source>
        <strain>BCG / Pasteur 1173P2</strain>
    </source>
</reference>
<accession>A1KLA4</accession>
<organism>
    <name type="scientific">Mycobacterium bovis (strain BCG / Pasteur 1173P2)</name>
    <dbReference type="NCBI Taxonomy" id="410289"/>
    <lineage>
        <taxon>Bacteria</taxon>
        <taxon>Bacillati</taxon>
        <taxon>Actinomycetota</taxon>
        <taxon>Actinomycetes</taxon>
        <taxon>Mycobacteriales</taxon>
        <taxon>Mycobacteriaceae</taxon>
        <taxon>Mycobacterium</taxon>
        <taxon>Mycobacterium tuberculosis complex</taxon>
    </lineage>
</organism>
<dbReference type="EMBL" id="AM408590">
    <property type="protein sequence ID" value="CAL72416.1"/>
    <property type="molecule type" value="Genomic_DNA"/>
</dbReference>
<dbReference type="RefSeq" id="WP_003899314.1">
    <property type="nucleotide sequence ID" value="NC_008769.1"/>
</dbReference>
<dbReference type="SMR" id="A1KLA4"/>
<dbReference type="KEGG" id="mbb:BCG_2428"/>
<dbReference type="HOGENOM" id="CLU_160655_0_1_11"/>
<dbReference type="Proteomes" id="UP000001472">
    <property type="component" value="Chromosome"/>
</dbReference>
<dbReference type="GO" id="GO:0005829">
    <property type="term" value="C:cytosol"/>
    <property type="evidence" value="ECO:0007669"/>
    <property type="project" value="TreeGrafter"/>
</dbReference>
<dbReference type="GO" id="GO:0015935">
    <property type="term" value="C:small ribosomal subunit"/>
    <property type="evidence" value="ECO:0007669"/>
    <property type="project" value="TreeGrafter"/>
</dbReference>
<dbReference type="GO" id="GO:0070181">
    <property type="term" value="F:small ribosomal subunit rRNA binding"/>
    <property type="evidence" value="ECO:0007669"/>
    <property type="project" value="TreeGrafter"/>
</dbReference>
<dbReference type="GO" id="GO:0003735">
    <property type="term" value="F:structural constituent of ribosome"/>
    <property type="evidence" value="ECO:0007669"/>
    <property type="project" value="InterPro"/>
</dbReference>
<dbReference type="GO" id="GO:0006412">
    <property type="term" value="P:translation"/>
    <property type="evidence" value="ECO:0007669"/>
    <property type="project" value="UniProtKB-UniRule"/>
</dbReference>
<dbReference type="FunFam" id="1.20.58.110:FF:000001">
    <property type="entry name" value="30S ribosomal protein S20"/>
    <property type="match status" value="1"/>
</dbReference>
<dbReference type="Gene3D" id="1.20.58.110">
    <property type="entry name" value="Ribosomal protein S20"/>
    <property type="match status" value="1"/>
</dbReference>
<dbReference type="HAMAP" id="MF_00500">
    <property type="entry name" value="Ribosomal_bS20"/>
    <property type="match status" value="1"/>
</dbReference>
<dbReference type="InterPro" id="IPR002583">
    <property type="entry name" value="Ribosomal_bS20"/>
</dbReference>
<dbReference type="InterPro" id="IPR036510">
    <property type="entry name" value="Ribosomal_bS20_sf"/>
</dbReference>
<dbReference type="NCBIfam" id="TIGR00029">
    <property type="entry name" value="S20"/>
    <property type="match status" value="1"/>
</dbReference>
<dbReference type="PANTHER" id="PTHR33398">
    <property type="entry name" value="30S RIBOSOMAL PROTEIN S20"/>
    <property type="match status" value="1"/>
</dbReference>
<dbReference type="PANTHER" id="PTHR33398:SF1">
    <property type="entry name" value="SMALL RIBOSOMAL SUBUNIT PROTEIN BS20C"/>
    <property type="match status" value="1"/>
</dbReference>
<dbReference type="Pfam" id="PF01649">
    <property type="entry name" value="Ribosomal_S20p"/>
    <property type="match status" value="1"/>
</dbReference>
<dbReference type="SUPFAM" id="SSF46992">
    <property type="entry name" value="Ribosomal protein S20"/>
    <property type="match status" value="1"/>
</dbReference>
<gene>
    <name evidence="1" type="primary">rpsT</name>
    <name type="ordered locus">BCG_2428</name>
</gene>
<keyword id="KW-0687">Ribonucleoprotein</keyword>
<keyword id="KW-0689">Ribosomal protein</keyword>
<keyword id="KW-0694">RNA-binding</keyword>
<keyword id="KW-0699">rRNA-binding</keyword>
<name>RS20_MYCBP</name>